<evidence type="ECO:0000255" key="1">
    <source>
        <dbReference type="HAMAP-Rule" id="MF_00409"/>
    </source>
</evidence>
<feature type="chain" id="PRO_1000123711" description="Tetraacyldisaccharide 4'-kinase">
    <location>
        <begin position="1"/>
        <end position="328"/>
    </location>
</feature>
<feature type="binding site" evidence="1">
    <location>
        <begin position="55"/>
        <end position="62"/>
    </location>
    <ligand>
        <name>ATP</name>
        <dbReference type="ChEBI" id="CHEBI:30616"/>
    </ligand>
</feature>
<comment type="function">
    <text evidence="1">Transfers the gamma-phosphate of ATP to the 4'-position of a tetraacyldisaccharide 1-phosphate intermediate (termed DS-1-P) to form tetraacyldisaccharide 1,4'-bis-phosphate (lipid IVA).</text>
</comment>
<comment type="catalytic activity">
    <reaction evidence="1">
        <text>a lipid A disaccharide + ATP = a lipid IVA + ADP + H(+)</text>
        <dbReference type="Rhea" id="RHEA:67840"/>
        <dbReference type="ChEBI" id="CHEBI:15378"/>
        <dbReference type="ChEBI" id="CHEBI:30616"/>
        <dbReference type="ChEBI" id="CHEBI:176343"/>
        <dbReference type="ChEBI" id="CHEBI:176425"/>
        <dbReference type="ChEBI" id="CHEBI:456216"/>
        <dbReference type="EC" id="2.7.1.130"/>
    </reaction>
</comment>
<comment type="pathway">
    <text evidence="1">Glycolipid biosynthesis; lipid IV(A) biosynthesis; lipid IV(A) from (3R)-3-hydroxytetradecanoyl-[acyl-carrier-protein] and UDP-N-acetyl-alpha-D-glucosamine: step 6/6.</text>
</comment>
<comment type="similarity">
    <text evidence="1">Belongs to the LpxK family.</text>
</comment>
<keyword id="KW-0067">ATP-binding</keyword>
<keyword id="KW-0418">Kinase</keyword>
<keyword id="KW-0441">Lipid A biosynthesis</keyword>
<keyword id="KW-0444">Lipid biosynthesis</keyword>
<keyword id="KW-0443">Lipid metabolism</keyword>
<keyword id="KW-0547">Nucleotide-binding</keyword>
<keyword id="KW-0808">Transferase</keyword>
<organism>
    <name type="scientific">Escherichia coli O17:K52:H18 (strain UMN026 / ExPEC)</name>
    <dbReference type="NCBI Taxonomy" id="585056"/>
    <lineage>
        <taxon>Bacteria</taxon>
        <taxon>Pseudomonadati</taxon>
        <taxon>Pseudomonadota</taxon>
        <taxon>Gammaproteobacteria</taxon>
        <taxon>Enterobacterales</taxon>
        <taxon>Enterobacteriaceae</taxon>
        <taxon>Escherichia</taxon>
    </lineage>
</organism>
<protein>
    <recommendedName>
        <fullName evidence="1">Tetraacyldisaccharide 4'-kinase</fullName>
        <ecNumber evidence="1">2.7.1.130</ecNumber>
    </recommendedName>
    <alternativeName>
        <fullName evidence="1">Lipid A 4'-kinase</fullName>
    </alternativeName>
</protein>
<sequence>MIEKIWSGESPLWRLLLPLSWLYGLVSGAIRLCYKLKLKRAWRAPVPVVVVGNLTAGGNGKTPVVVWLVEQLQQRGIRVGVVSRGYGGKAESYPLLLSADTTTAQAGDEPVLIYQRTGAPVAVSPVRSDAVKAILAQHPDVQIIVTDDGLQHYRLARDVEIVVVDGVRRFGNGWWLPAGPMRERAGRLKSVDAVIVNGGVPRSGEIPMHLLPGQAVNLRTGMRCDVAQLEHVVAMAGIGHPPRFFATLKMCGVQPEKCVPLADHQSLNHADVSALVSAGQTLVMTEKDAVKCRAFAEENWWYLPVDAQLSGDEPAKLLAQLTSLASGN</sequence>
<gene>
    <name evidence="1" type="primary">lpxK</name>
    <name type="ordered locus">ECUMN_1108</name>
</gene>
<dbReference type="EC" id="2.7.1.130" evidence="1"/>
<dbReference type="EMBL" id="CU928163">
    <property type="protein sequence ID" value="CAR12317.1"/>
    <property type="molecule type" value="Genomic_DNA"/>
</dbReference>
<dbReference type="RefSeq" id="WP_000570555.1">
    <property type="nucleotide sequence ID" value="NC_011751.1"/>
</dbReference>
<dbReference type="RefSeq" id="YP_002411861.1">
    <property type="nucleotide sequence ID" value="NC_011751.1"/>
</dbReference>
<dbReference type="SMR" id="B7NAR4"/>
<dbReference type="STRING" id="585056.ECUMN_1108"/>
<dbReference type="KEGG" id="eum:ECUMN_1108"/>
<dbReference type="PATRIC" id="fig|585056.7.peg.1303"/>
<dbReference type="HOGENOM" id="CLU_038816_2_0_6"/>
<dbReference type="UniPathway" id="UPA00359">
    <property type="reaction ID" value="UER00482"/>
</dbReference>
<dbReference type="Proteomes" id="UP000007097">
    <property type="component" value="Chromosome"/>
</dbReference>
<dbReference type="GO" id="GO:0005886">
    <property type="term" value="C:plasma membrane"/>
    <property type="evidence" value="ECO:0007669"/>
    <property type="project" value="TreeGrafter"/>
</dbReference>
<dbReference type="GO" id="GO:0005524">
    <property type="term" value="F:ATP binding"/>
    <property type="evidence" value="ECO:0007669"/>
    <property type="project" value="UniProtKB-UniRule"/>
</dbReference>
<dbReference type="GO" id="GO:0009029">
    <property type="term" value="F:tetraacyldisaccharide 4'-kinase activity"/>
    <property type="evidence" value="ECO:0007669"/>
    <property type="project" value="UniProtKB-UniRule"/>
</dbReference>
<dbReference type="GO" id="GO:0009245">
    <property type="term" value="P:lipid A biosynthetic process"/>
    <property type="evidence" value="ECO:0007669"/>
    <property type="project" value="UniProtKB-UniRule"/>
</dbReference>
<dbReference type="GO" id="GO:0009244">
    <property type="term" value="P:lipopolysaccharide core region biosynthetic process"/>
    <property type="evidence" value="ECO:0007669"/>
    <property type="project" value="TreeGrafter"/>
</dbReference>
<dbReference type="HAMAP" id="MF_00409">
    <property type="entry name" value="LpxK"/>
    <property type="match status" value="1"/>
</dbReference>
<dbReference type="InterPro" id="IPR003758">
    <property type="entry name" value="LpxK"/>
</dbReference>
<dbReference type="InterPro" id="IPR027417">
    <property type="entry name" value="P-loop_NTPase"/>
</dbReference>
<dbReference type="NCBIfam" id="TIGR00682">
    <property type="entry name" value="lpxK"/>
    <property type="match status" value="1"/>
</dbReference>
<dbReference type="PANTHER" id="PTHR42724">
    <property type="entry name" value="TETRAACYLDISACCHARIDE 4'-KINASE"/>
    <property type="match status" value="1"/>
</dbReference>
<dbReference type="PANTHER" id="PTHR42724:SF1">
    <property type="entry name" value="TETRAACYLDISACCHARIDE 4'-KINASE, MITOCHONDRIAL-RELATED"/>
    <property type="match status" value="1"/>
</dbReference>
<dbReference type="Pfam" id="PF02606">
    <property type="entry name" value="LpxK"/>
    <property type="match status" value="1"/>
</dbReference>
<dbReference type="SUPFAM" id="SSF52540">
    <property type="entry name" value="P-loop containing nucleoside triphosphate hydrolases"/>
    <property type="match status" value="1"/>
</dbReference>
<proteinExistence type="inferred from homology"/>
<accession>B7NAR4</accession>
<name>LPXK_ECOLU</name>
<reference key="1">
    <citation type="journal article" date="2009" name="PLoS Genet.">
        <title>Organised genome dynamics in the Escherichia coli species results in highly diverse adaptive paths.</title>
        <authorList>
            <person name="Touchon M."/>
            <person name="Hoede C."/>
            <person name="Tenaillon O."/>
            <person name="Barbe V."/>
            <person name="Baeriswyl S."/>
            <person name="Bidet P."/>
            <person name="Bingen E."/>
            <person name="Bonacorsi S."/>
            <person name="Bouchier C."/>
            <person name="Bouvet O."/>
            <person name="Calteau A."/>
            <person name="Chiapello H."/>
            <person name="Clermont O."/>
            <person name="Cruveiller S."/>
            <person name="Danchin A."/>
            <person name="Diard M."/>
            <person name="Dossat C."/>
            <person name="Karoui M.E."/>
            <person name="Frapy E."/>
            <person name="Garry L."/>
            <person name="Ghigo J.M."/>
            <person name="Gilles A.M."/>
            <person name="Johnson J."/>
            <person name="Le Bouguenec C."/>
            <person name="Lescat M."/>
            <person name="Mangenot S."/>
            <person name="Martinez-Jehanne V."/>
            <person name="Matic I."/>
            <person name="Nassif X."/>
            <person name="Oztas S."/>
            <person name="Petit M.A."/>
            <person name="Pichon C."/>
            <person name="Rouy Z."/>
            <person name="Ruf C.S."/>
            <person name="Schneider D."/>
            <person name="Tourret J."/>
            <person name="Vacherie B."/>
            <person name="Vallenet D."/>
            <person name="Medigue C."/>
            <person name="Rocha E.P.C."/>
            <person name="Denamur E."/>
        </authorList>
    </citation>
    <scope>NUCLEOTIDE SEQUENCE [LARGE SCALE GENOMIC DNA]</scope>
    <source>
        <strain>UMN026 / ExPEC</strain>
    </source>
</reference>